<name>PHD1_ARATH</name>
<gene>
    <name evidence="4" type="primary">PHD1</name>
    <name evidence="6" type="ordered locus">At1g43770</name>
    <name evidence="7" type="ORF">F28H19.3</name>
</gene>
<accession>B3H578</accession>
<accession>Q9MAS0</accession>
<sequence>MSLHVKGPVCQTCGDIGFEEALVFCDSCMFESIHRYCLGITPIPFTEYITWICEDCDNSESDSDCNEVDQTVKKKKKSRNQPLVVLAEDNVLQEPLEGSKREESSCSRKPHELTCLDGNGESVLEAADSSSVPDHSSCTSKRKEVDQTANLGHILERSEKKKKKKKKKKSINHSPPVLAVEDHELQGTTNVVEPVEVSSSSPTKETMESKRQESSDSRKPHELTCLVGDSETANSSSVPEHNSCAVKKRKLSSGNKQIQLADGSSSCRVAESNMPLTLTSRNYRAQPIKIPIWRGLMSVKGGNSCTMDGIVAHVSSLACPKVHETASSLKGRLSAEILPRLEVWPKTFLKNGGPKDESVALFFFPSSESNDEKVFDSLVDKMKKNDSAMRCVLNDAELLLFTSYMLPKDSWTFNSKYYLWGVFKPRQTSRY</sequence>
<organism>
    <name type="scientific">Arabidopsis thaliana</name>
    <name type="common">Mouse-ear cress</name>
    <dbReference type="NCBI Taxonomy" id="3702"/>
    <lineage>
        <taxon>Eukaryota</taxon>
        <taxon>Viridiplantae</taxon>
        <taxon>Streptophyta</taxon>
        <taxon>Embryophyta</taxon>
        <taxon>Tracheophyta</taxon>
        <taxon>Spermatophyta</taxon>
        <taxon>Magnoliopsida</taxon>
        <taxon>eudicotyledons</taxon>
        <taxon>Gunneridae</taxon>
        <taxon>Pentapetalae</taxon>
        <taxon>rosids</taxon>
        <taxon>malvids</taxon>
        <taxon>Brassicales</taxon>
        <taxon>Brassicaceae</taxon>
        <taxon>Camelineae</taxon>
        <taxon>Arabidopsis</taxon>
    </lineage>
</organism>
<comment type="function">
    <text evidence="3">Together with AIPP3/BDT1, cooperates to form a BAH-PHD bivalent histone reader complex able to read histone H3 lysine 27 trimethylation (H3K27me3) histone marks in order to regulate transcription, especially to prevent early flowering; promotes AIPP3/BDT1 binding to H3K27me3.</text>
</comment>
<comment type="subunit">
    <text evidence="3">Interacts directly with AIPP3/BDT1.</text>
</comment>
<comment type="disruption phenotype">
    <text evidence="3">No obvious developmental defects (PubMed:33433058). Plants missing all PHD finger-containing proteins (e.g. PHD1, PAIPP2/PHD2, AIPP2/PHD3, PHD4, PHD5 and PHD6) exhibit an increased expression of flowering genes leading to an early flowering phenotype under long-day conditions as well as growth retardation (PubMed:33433058).</text>
</comment>
<comment type="sequence caution" evidence="5">
    <conflict type="erroneous gene model prediction">
        <sequence resource="EMBL-CDS" id="AAF63102"/>
    </conflict>
</comment>
<protein>
    <recommendedName>
        <fullName evidence="4">PHD finger-containing protein 1</fullName>
    </recommendedName>
</protein>
<proteinExistence type="evidence at protein level"/>
<evidence type="ECO:0000255" key="1">
    <source>
        <dbReference type="PROSITE-ProRule" id="PRU00146"/>
    </source>
</evidence>
<evidence type="ECO:0000256" key="2">
    <source>
        <dbReference type="SAM" id="MobiDB-lite"/>
    </source>
</evidence>
<evidence type="ECO:0000269" key="3">
    <source>
    </source>
</evidence>
<evidence type="ECO:0000303" key="4">
    <source>
    </source>
</evidence>
<evidence type="ECO:0000305" key="5"/>
<evidence type="ECO:0000312" key="6">
    <source>
        <dbReference type="Araport" id="AT1G43770"/>
    </source>
</evidence>
<evidence type="ECO:0000312" key="7">
    <source>
        <dbReference type="EMBL" id="AAF63102.1"/>
    </source>
</evidence>
<keyword id="KW-0479">Metal-binding</keyword>
<keyword id="KW-1185">Reference proteome</keyword>
<keyword id="KW-0804">Transcription</keyword>
<keyword id="KW-0805">Transcription regulation</keyword>
<keyword id="KW-0862">Zinc</keyword>
<keyword id="KW-0863">Zinc-finger</keyword>
<reference key="1">
    <citation type="journal article" date="2000" name="Nature">
        <title>Sequence and analysis of chromosome 1 of the plant Arabidopsis thaliana.</title>
        <authorList>
            <person name="Theologis A."/>
            <person name="Ecker J.R."/>
            <person name="Palm C.J."/>
            <person name="Federspiel N.A."/>
            <person name="Kaul S."/>
            <person name="White O."/>
            <person name="Alonso J."/>
            <person name="Altafi H."/>
            <person name="Araujo R."/>
            <person name="Bowman C.L."/>
            <person name="Brooks S.Y."/>
            <person name="Buehler E."/>
            <person name="Chan A."/>
            <person name="Chao Q."/>
            <person name="Chen H."/>
            <person name="Cheuk R.F."/>
            <person name="Chin C.W."/>
            <person name="Chung M.K."/>
            <person name="Conn L."/>
            <person name="Conway A.B."/>
            <person name="Conway A.R."/>
            <person name="Creasy T.H."/>
            <person name="Dewar K."/>
            <person name="Dunn P."/>
            <person name="Etgu P."/>
            <person name="Feldblyum T.V."/>
            <person name="Feng J.-D."/>
            <person name="Fong B."/>
            <person name="Fujii C.Y."/>
            <person name="Gill J.E."/>
            <person name="Goldsmith A.D."/>
            <person name="Haas B."/>
            <person name="Hansen N.F."/>
            <person name="Hughes B."/>
            <person name="Huizar L."/>
            <person name="Hunter J.L."/>
            <person name="Jenkins J."/>
            <person name="Johnson-Hopson C."/>
            <person name="Khan S."/>
            <person name="Khaykin E."/>
            <person name="Kim C.J."/>
            <person name="Koo H.L."/>
            <person name="Kremenetskaia I."/>
            <person name="Kurtz D.B."/>
            <person name="Kwan A."/>
            <person name="Lam B."/>
            <person name="Langin-Hooper S."/>
            <person name="Lee A."/>
            <person name="Lee J.M."/>
            <person name="Lenz C.A."/>
            <person name="Li J.H."/>
            <person name="Li Y.-P."/>
            <person name="Lin X."/>
            <person name="Liu S.X."/>
            <person name="Liu Z.A."/>
            <person name="Luros J.S."/>
            <person name="Maiti R."/>
            <person name="Marziali A."/>
            <person name="Militscher J."/>
            <person name="Miranda M."/>
            <person name="Nguyen M."/>
            <person name="Nierman W.C."/>
            <person name="Osborne B.I."/>
            <person name="Pai G."/>
            <person name="Peterson J."/>
            <person name="Pham P.K."/>
            <person name="Rizzo M."/>
            <person name="Rooney T."/>
            <person name="Rowley D."/>
            <person name="Sakano H."/>
            <person name="Salzberg S.L."/>
            <person name="Schwartz J.R."/>
            <person name="Shinn P."/>
            <person name="Southwick A.M."/>
            <person name="Sun H."/>
            <person name="Tallon L.J."/>
            <person name="Tambunga G."/>
            <person name="Toriumi M.J."/>
            <person name="Town C.D."/>
            <person name="Utterback T."/>
            <person name="Van Aken S."/>
            <person name="Vaysberg M."/>
            <person name="Vysotskaia V.S."/>
            <person name="Walker M."/>
            <person name="Wu D."/>
            <person name="Yu G."/>
            <person name="Fraser C.M."/>
            <person name="Venter J.C."/>
            <person name="Davis R.W."/>
        </authorList>
    </citation>
    <scope>NUCLEOTIDE SEQUENCE [LARGE SCALE GENOMIC DNA]</scope>
    <source>
        <strain>cv. Columbia</strain>
    </source>
</reference>
<reference key="2">
    <citation type="journal article" date="2017" name="Plant J.">
        <title>Araport11: a complete reannotation of the Arabidopsis thaliana reference genome.</title>
        <authorList>
            <person name="Cheng C.Y."/>
            <person name="Krishnakumar V."/>
            <person name="Chan A.P."/>
            <person name="Thibaud-Nissen F."/>
            <person name="Schobel S."/>
            <person name="Town C.D."/>
        </authorList>
    </citation>
    <scope>GENOME REANNOTATION</scope>
    <source>
        <strain>cv. Columbia</strain>
    </source>
</reference>
<reference key="3">
    <citation type="submission" date="2009-03" db="EMBL/GenBank/DDBJ databases">
        <title>ORF cloning and analysis of Arabidopsis transcription factor genes.</title>
        <authorList>
            <person name="Fujita M."/>
            <person name="Mizukado S."/>
            <person name="Seki M."/>
            <person name="Shinozaki K."/>
            <person name="Mitsuda N."/>
            <person name="Takiguchi Y."/>
            <person name="Takagi M."/>
        </authorList>
    </citation>
    <scope>NUCLEOTIDE SEQUENCE [LARGE SCALE MRNA]</scope>
</reference>
<reference key="4">
    <citation type="journal article" date="2016" name="Plant Cell">
        <title>The SUMO E3 ligase-like proteins PIAL1 and PIAL2 interact with MOM1 and form a novel complex required for transcriptional silencing.</title>
        <authorList>
            <person name="Han Y.-F."/>
            <person name="Zhao Q.-Y."/>
            <person name="Dang L.-L."/>
            <person name="Luo Y.-X."/>
            <person name="Chen S.-S."/>
            <person name="Shao C.-R."/>
            <person name="Huang H.-W."/>
            <person name="Li Y.-Q."/>
            <person name="Li L."/>
            <person name="Cai T."/>
            <person name="Chen S."/>
            <person name="He X.-J."/>
        </authorList>
    </citation>
    <scope>INTERACTION WITH MOM1</scope>
    <source>
        <strain>cv. Columbia</strain>
    </source>
</reference>
<reference key="5">
    <citation type="journal article" date="2021" name="J. Integr. Plant Biol.">
        <title>A histone H3K27me3 reader cooperates with a family of PHD finger-containing proteins to regulate flowering time in Arabidopsis.</title>
        <authorList>
            <person name="Qian F."/>
            <person name="Zhao Q.-Y."/>
            <person name="Zhang T.-N."/>
            <person name="Li Y.-L."/>
            <person name="Su Y.-N."/>
            <person name="Li L."/>
            <person name="Sui J.-H."/>
            <person name="Chen S."/>
            <person name="He X.-J."/>
        </authorList>
    </citation>
    <scope>FUNCTION</scope>
    <scope>DISRUPTION PHENOTYPE</scope>
    <scope>INTERACTION WITH AIPP3/BDT1</scope>
    <source>
        <strain>cv. Columbia</strain>
    </source>
</reference>
<dbReference type="EMBL" id="AC006423">
    <property type="protein sequence ID" value="AAF63102.1"/>
    <property type="status" value="ALT_SEQ"/>
    <property type="molecule type" value="Genomic_DNA"/>
</dbReference>
<dbReference type="EMBL" id="CP002684">
    <property type="protein sequence ID" value="AEE31995.1"/>
    <property type="molecule type" value="Genomic_DNA"/>
</dbReference>
<dbReference type="EMBL" id="CP002684">
    <property type="protein sequence ID" value="ANM57966.1"/>
    <property type="molecule type" value="Genomic_DNA"/>
</dbReference>
<dbReference type="EMBL" id="AB493497">
    <property type="protein sequence ID" value="BAH30335.1"/>
    <property type="molecule type" value="mRNA"/>
</dbReference>
<dbReference type="PIR" id="E96501">
    <property type="entry name" value="E96501"/>
</dbReference>
<dbReference type="RefSeq" id="NP_001117432.1">
    <property type="nucleotide sequence ID" value="NM_001123960.2"/>
</dbReference>
<dbReference type="RefSeq" id="NP_001320439.1">
    <property type="nucleotide sequence ID" value="NM_001333220.1"/>
</dbReference>
<dbReference type="SMR" id="B3H578"/>
<dbReference type="PaxDb" id="3702-AT1G43770.2"/>
<dbReference type="ProteomicsDB" id="175087"/>
<dbReference type="EnsemblPlants" id="AT1G43770.2">
    <property type="protein sequence ID" value="AT1G43770.2"/>
    <property type="gene ID" value="AT1G43770"/>
</dbReference>
<dbReference type="EnsemblPlants" id="AT1G43770.3">
    <property type="protein sequence ID" value="AT1G43770.3"/>
    <property type="gene ID" value="AT1G43770"/>
</dbReference>
<dbReference type="GeneID" id="840971"/>
<dbReference type="Gramene" id="AT1G43770.2">
    <property type="protein sequence ID" value="AT1G43770.2"/>
    <property type="gene ID" value="AT1G43770"/>
</dbReference>
<dbReference type="Gramene" id="AT1G43770.3">
    <property type="protein sequence ID" value="AT1G43770.3"/>
    <property type="gene ID" value="AT1G43770"/>
</dbReference>
<dbReference type="KEGG" id="ath:AT1G43770"/>
<dbReference type="Araport" id="AT1G43770"/>
<dbReference type="TAIR" id="AT1G43770"/>
<dbReference type="eggNOG" id="ENOG502RXM7">
    <property type="taxonomic scope" value="Eukaryota"/>
</dbReference>
<dbReference type="HOGENOM" id="CLU_042863_1_0_1"/>
<dbReference type="OMA" id="SCDECHP"/>
<dbReference type="PRO" id="PR:B3H578"/>
<dbReference type="Proteomes" id="UP000006548">
    <property type="component" value="Chromosome 1"/>
</dbReference>
<dbReference type="ExpressionAtlas" id="B3H578">
    <property type="expression patterns" value="baseline and differential"/>
</dbReference>
<dbReference type="GO" id="GO:0140566">
    <property type="term" value="F:histone reader activity"/>
    <property type="evidence" value="ECO:0007669"/>
    <property type="project" value="InterPro"/>
</dbReference>
<dbReference type="GO" id="GO:0008270">
    <property type="term" value="F:zinc ion binding"/>
    <property type="evidence" value="ECO:0007669"/>
    <property type="project" value="UniProtKB-KW"/>
</dbReference>
<dbReference type="GO" id="GO:0034244">
    <property type="term" value="P:negative regulation of transcription elongation by RNA polymerase II"/>
    <property type="evidence" value="ECO:0007669"/>
    <property type="project" value="InterPro"/>
</dbReference>
<dbReference type="Gene3D" id="3.30.40.10">
    <property type="entry name" value="Zinc/RING finger domain, C3HC4 (zinc finger)"/>
    <property type="match status" value="1"/>
</dbReference>
<dbReference type="InterPro" id="IPR056280">
    <property type="entry name" value="AIPP2-like_SPOC"/>
</dbReference>
<dbReference type="InterPro" id="IPR049914">
    <property type="entry name" value="PHD1-3/5-6"/>
</dbReference>
<dbReference type="InterPro" id="IPR011011">
    <property type="entry name" value="Znf_FYVE_PHD"/>
</dbReference>
<dbReference type="InterPro" id="IPR001965">
    <property type="entry name" value="Znf_PHD"/>
</dbReference>
<dbReference type="InterPro" id="IPR019787">
    <property type="entry name" value="Znf_PHD-finger"/>
</dbReference>
<dbReference type="InterPro" id="IPR013083">
    <property type="entry name" value="Znf_RING/FYVE/PHD"/>
</dbReference>
<dbReference type="PANTHER" id="PTHR33304">
    <property type="match status" value="1"/>
</dbReference>
<dbReference type="PANTHER" id="PTHR33304:SF18">
    <property type="entry name" value="CHROMATIN REGULATOR PHD FAMILY-RELATED"/>
    <property type="match status" value="1"/>
</dbReference>
<dbReference type="Pfam" id="PF23121">
    <property type="entry name" value="SPOC_AIPP2"/>
    <property type="match status" value="1"/>
</dbReference>
<dbReference type="SMART" id="SM00249">
    <property type="entry name" value="PHD"/>
    <property type="match status" value="1"/>
</dbReference>
<dbReference type="SUPFAM" id="SSF57903">
    <property type="entry name" value="FYVE/PHD zinc finger"/>
    <property type="match status" value="1"/>
</dbReference>
<dbReference type="PROSITE" id="PS50016">
    <property type="entry name" value="ZF_PHD_2"/>
    <property type="match status" value="1"/>
</dbReference>
<feature type="chain" id="PRO_0000458545" description="PHD finger-containing protein 1">
    <location>
        <begin position="1"/>
        <end position="431"/>
    </location>
</feature>
<feature type="zinc finger region" description="PHD-type" evidence="1">
    <location>
        <begin position="7"/>
        <end position="59"/>
    </location>
</feature>
<feature type="region of interest" description="Disordered" evidence="2">
    <location>
        <begin position="125"/>
        <end position="221"/>
    </location>
</feature>
<feature type="compositionally biased region" description="Polar residues" evidence="2">
    <location>
        <begin position="128"/>
        <end position="139"/>
    </location>
</feature>
<feature type="compositionally biased region" description="Basic residues" evidence="2">
    <location>
        <begin position="160"/>
        <end position="171"/>
    </location>
</feature>
<feature type="compositionally biased region" description="Low complexity" evidence="2">
    <location>
        <begin position="191"/>
        <end position="202"/>
    </location>
</feature>
<feature type="compositionally biased region" description="Basic and acidic residues" evidence="2">
    <location>
        <begin position="205"/>
        <end position="221"/>
    </location>
</feature>
<feature type="binding site" evidence="1">
    <location>
        <position position="10"/>
    </location>
    <ligand>
        <name>Zn(2+)</name>
        <dbReference type="ChEBI" id="CHEBI:29105"/>
        <label>1</label>
    </ligand>
</feature>
<feature type="binding site" evidence="1">
    <location>
        <position position="13"/>
    </location>
    <ligand>
        <name>Zn(2+)</name>
        <dbReference type="ChEBI" id="CHEBI:29105"/>
        <label>1</label>
    </ligand>
</feature>
<feature type="binding site" evidence="1">
    <location>
        <position position="25"/>
    </location>
    <ligand>
        <name>Zn(2+)</name>
        <dbReference type="ChEBI" id="CHEBI:29105"/>
        <label>2</label>
    </ligand>
</feature>
<feature type="binding site" evidence="1">
    <location>
        <position position="28"/>
    </location>
    <ligand>
        <name>Zn(2+)</name>
        <dbReference type="ChEBI" id="CHEBI:29105"/>
        <label>2</label>
    </ligand>
</feature>
<feature type="binding site" evidence="1">
    <location>
        <position position="34"/>
    </location>
    <ligand>
        <name>Zn(2+)</name>
        <dbReference type="ChEBI" id="CHEBI:29105"/>
        <label>1</label>
    </ligand>
</feature>
<feature type="binding site" evidence="1">
    <location>
        <position position="37"/>
    </location>
    <ligand>
        <name>Zn(2+)</name>
        <dbReference type="ChEBI" id="CHEBI:29105"/>
        <label>1</label>
    </ligand>
</feature>
<feature type="binding site" evidence="1">
    <location>
        <position position="53"/>
    </location>
    <ligand>
        <name>Zn(2+)</name>
        <dbReference type="ChEBI" id="CHEBI:29105"/>
        <label>2</label>
    </ligand>
</feature>
<feature type="binding site" evidence="1">
    <location>
        <position position="56"/>
    </location>
    <ligand>
        <name>Zn(2+)</name>
        <dbReference type="ChEBI" id="CHEBI:29105"/>
        <label>2</label>
    </ligand>
</feature>